<name>TXTP_HUMAN</name>
<protein>
    <recommendedName>
        <fullName>Tricarboxylate transport protein, mitochondrial</fullName>
    </recommendedName>
    <alternativeName>
        <fullName>Citrate transport protein</fullName>
        <shortName>CTP</shortName>
    </alternativeName>
    <alternativeName>
        <fullName evidence="14">Mitochondrial citrate carrier</fullName>
        <shortName evidence="14">CIC</shortName>
    </alternativeName>
    <alternativeName>
        <fullName>Solute carrier family 25 member 1</fullName>
    </alternativeName>
    <alternativeName>
        <fullName>Tricarboxylate carrier protein</fullName>
    </alternativeName>
</protein>
<keyword id="KW-0050">Antiport</keyword>
<keyword id="KW-1004">Congenital myasthenic syndrome</keyword>
<keyword id="KW-0225">Disease variant</keyword>
<keyword id="KW-0472">Membrane</keyword>
<keyword id="KW-0496">Mitochondrion</keyword>
<keyword id="KW-0999">Mitochondrion inner membrane</keyword>
<keyword id="KW-0597">Phosphoprotein</keyword>
<keyword id="KW-1267">Proteomics identification</keyword>
<keyword id="KW-1185">Reference proteome</keyword>
<keyword id="KW-0677">Repeat</keyword>
<keyword id="KW-0812">Transmembrane</keyword>
<keyword id="KW-1133">Transmembrane helix</keyword>
<keyword id="KW-0813">Transport</keyword>
<evidence type="ECO:0000250" key="1">
    <source>
        <dbReference type="UniProtKB" id="P32089"/>
    </source>
</evidence>
<evidence type="ECO:0000250" key="2">
    <source>
        <dbReference type="UniProtKB" id="Q8JZU2"/>
    </source>
</evidence>
<evidence type="ECO:0000255" key="3"/>
<evidence type="ECO:0000255" key="4">
    <source>
        <dbReference type="PROSITE-ProRule" id="PRU00282"/>
    </source>
</evidence>
<evidence type="ECO:0000269" key="5">
    <source>
    </source>
</evidence>
<evidence type="ECO:0000269" key="6">
    <source>
    </source>
</evidence>
<evidence type="ECO:0000269" key="7">
    <source>
    </source>
</evidence>
<evidence type="ECO:0000269" key="8">
    <source>
    </source>
</evidence>
<evidence type="ECO:0000269" key="9">
    <source>
    </source>
</evidence>
<evidence type="ECO:0000269" key="10">
    <source>
    </source>
</evidence>
<evidence type="ECO:0000269" key="11">
    <source>
    </source>
</evidence>
<evidence type="ECO:0000269" key="12">
    <source>
    </source>
</evidence>
<evidence type="ECO:0000269" key="13">
    <source>
    </source>
</evidence>
<evidence type="ECO:0000303" key="14">
    <source>
    </source>
</evidence>
<evidence type="ECO:0000305" key="15"/>
<evidence type="ECO:0000305" key="16">
    <source>
    </source>
</evidence>
<evidence type="ECO:0007744" key="17">
    <source>
    </source>
</evidence>
<reference key="1">
    <citation type="journal article" date="1995" name="Genomics">
        <title>Localization of the human mitochondrial citrate transporter protein gene to chromosome 22q11 in the DiGeorge syndrome critical region.</title>
        <authorList>
            <person name="Heisterkamp N."/>
            <person name="Mulder M.P."/>
            <person name="Langeveld A."/>
            <person name="ten Hoeve J."/>
            <person name="Wang Z."/>
            <person name="Roe B."/>
            <person name="Groffen J."/>
        </authorList>
    </citation>
    <scope>NUCLEOTIDE SEQUENCE [MRNA]</scope>
</reference>
<reference key="2">
    <citation type="journal article" date="1996" name="Genomics">
        <title>Cloning, genomic organization, and chromosomal localization of human citrate transport protein to the DiGeorge/velocardiofacial syndrome minimal critical region.</title>
        <authorList>
            <person name="Goldmuntz E."/>
            <person name="Wang Z."/>
            <person name="Roe B.A."/>
            <person name="Budarf M.L."/>
        </authorList>
    </citation>
    <scope>NUCLEOTIDE SEQUENCE [GENOMIC DNA / MRNA]</scope>
    <source>
        <tissue>Brain</tissue>
    </source>
</reference>
<reference key="3">
    <citation type="journal article" date="2004" name="Nat. Genet.">
        <title>Complete sequencing and characterization of 21,243 full-length human cDNAs.</title>
        <authorList>
            <person name="Ota T."/>
            <person name="Suzuki Y."/>
            <person name="Nishikawa T."/>
            <person name="Otsuki T."/>
            <person name="Sugiyama T."/>
            <person name="Irie R."/>
            <person name="Wakamatsu A."/>
            <person name="Hayashi K."/>
            <person name="Sato H."/>
            <person name="Nagai K."/>
            <person name="Kimura K."/>
            <person name="Makita H."/>
            <person name="Sekine M."/>
            <person name="Obayashi M."/>
            <person name="Nishi T."/>
            <person name="Shibahara T."/>
            <person name="Tanaka T."/>
            <person name="Ishii S."/>
            <person name="Yamamoto J."/>
            <person name="Saito K."/>
            <person name="Kawai Y."/>
            <person name="Isono Y."/>
            <person name="Nakamura Y."/>
            <person name="Nagahari K."/>
            <person name="Murakami K."/>
            <person name="Yasuda T."/>
            <person name="Iwayanagi T."/>
            <person name="Wagatsuma M."/>
            <person name="Shiratori A."/>
            <person name="Sudo H."/>
            <person name="Hosoiri T."/>
            <person name="Kaku Y."/>
            <person name="Kodaira H."/>
            <person name="Kondo H."/>
            <person name="Sugawara M."/>
            <person name="Takahashi M."/>
            <person name="Kanda K."/>
            <person name="Yokoi T."/>
            <person name="Furuya T."/>
            <person name="Kikkawa E."/>
            <person name="Omura Y."/>
            <person name="Abe K."/>
            <person name="Kamihara K."/>
            <person name="Katsuta N."/>
            <person name="Sato K."/>
            <person name="Tanikawa M."/>
            <person name="Yamazaki M."/>
            <person name="Ninomiya K."/>
            <person name="Ishibashi T."/>
            <person name="Yamashita H."/>
            <person name="Murakawa K."/>
            <person name="Fujimori K."/>
            <person name="Tanai H."/>
            <person name="Kimata M."/>
            <person name="Watanabe M."/>
            <person name="Hiraoka S."/>
            <person name="Chiba Y."/>
            <person name="Ishida S."/>
            <person name="Ono Y."/>
            <person name="Takiguchi S."/>
            <person name="Watanabe S."/>
            <person name="Yosida M."/>
            <person name="Hotuta T."/>
            <person name="Kusano J."/>
            <person name="Kanehori K."/>
            <person name="Takahashi-Fujii A."/>
            <person name="Hara H."/>
            <person name="Tanase T.-O."/>
            <person name="Nomura Y."/>
            <person name="Togiya S."/>
            <person name="Komai F."/>
            <person name="Hara R."/>
            <person name="Takeuchi K."/>
            <person name="Arita M."/>
            <person name="Imose N."/>
            <person name="Musashino K."/>
            <person name="Yuuki H."/>
            <person name="Oshima A."/>
            <person name="Sasaki N."/>
            <person name="Aotsuka S."/>
            <person name="Yoshikawa Y."/>
            <person name="Matsunawa H."/>
            <person name="Ichihara T."/>
            <person name="Shiohata N."/>
            <person name="Sano S."/>
            <person name="Moriya S."/>
            <person name="Momiyama H."/>
            <person name="Satoh N."/>
            <person name="Takami S."/>
            <person name="Terashima Y."/>
            <person name="Suzuki O."/>
            <person name="Nakagawa S."/>
            <person name="Senoh A."/>
            <person name="Mizoguchi H."/>
            <person name="Goto Y."/>
            <person name="Shimizu F."/>
            <person name="Wakebe H."/>
            <person name="Hishigaki H."/>
            <person name="Watanabe T."/>
            <person name="Sugiyama A."/>
            <person name="Takemoto M."/>
            <person name="Kawakami B."/>
            <person name="Yamazaki M."/>
            <person name="Watanabe K."/>
            <person name="Kumagai A."/>
            <person name="Itakura S."/>
            <person name="Fukuzumi Y."/>
            <person name="Fujimori Y."/>
            <person name="Komiyama M."/>
            <person name="Tashiro H."/>
            <person name="Tanigami A."/>
            <person name="Fujiwara T."/>
            <person name="Ono T."/>
            <person name="Yamada K."/>
            <person name="Fujii Y."/>
            <person name="Ozaki K."/>
            <person name="Hirao M."/>
            <person name="Ohmori Y."/>
            <person name="Kawabata A."/>
            <person name="Hikiji T."/>
            <person name="Kobatake N."/>
            <person name="Inagaki H."/>
            <person name="Ikema Y."/>
            <person name="Okamoto S."/>
            <person name="Okitani R."/>
            <person name="Kawakami T."/>
            <person name="Noguchi S."/>
            <person name="Itoh T."/>
            <person name="Shigeta K."/>
            <person name="Senba T."/>
            <person name="Matsumura K."/>
            <person name="Nakajima Y."/>
            <person name="Mizuno T."/>
            <person name="Morinaga M."/>
            <person name="Sasaki M."/>
            <person name="Togashi T."/>
            <person name="Oyama M."/>
            <person name="Hata H."/>
            <person name="Watanabe M."/>
            <person name="Komatsu T."/>
            <person name="Mizushima-Sugano J."/>
            <person name="Satoh T."/>
            <person name="Shirai Y."/>
            <person name="Takahashi Y."/>
            <person name="Nakagawa K."/>
            <person name="Okumura K."/>
            <person name="Nagase T."/>
            <person name="Nomura N."/>
            <person name="Kikuchi H."/>
            <person name="Masuho Y."/>
            <person name="Yamashita R."/>
            <person name="Nakai K."/>
            <person name="Yada T."/>
            <person name="Nakamura Y."/>
            <person name="Ohara O."/>
            <person name="Isogai T."/>
            <person name="Sugano S."/>
        </authorList>
    </citation>
    <scope>NUCLEOTIDE SEQUENCE [LARGE SCALE MRNA]</scope>
    <source>
        <tissue>Testis</tissue>
    </source>
</reference>
<reference key="4">
    <citation type="journal article" date="2004" name="Genome Res.">
        <title>The status, quality, and expansion of the NIH full-length cDNA project: the Mammalian Gene Collection (MGC).</title>
        <authorList>
            <consortium name="The MGC Project Team"/>
        </authorList>
    </citation>
    <scope>NUCLEOTIDE SEQUENCE [LARGE SCALE MRNA]</scope>
    <source>
        <tissue>Kidney</tissue>
    </source>
</reference>
<reference key="5">
    <citation type="journal article" date="2009" name="Science">
        <title>Lysine acetylation targets protein complexes and co-regulates major cellular functions.</title>
        <authorList>
            <person name="Choudhary C."/>
            <person name="Kumar C."/>
            <person name="Gnad F."/>
            <person name="Nielsen M.L."/>
            <person name="Rehman M."/>
            <person name="Walther T.C."/>
            <person name="Olsen J.V."/>
            <person name="Mann M."/>
        </authorList>
    </citation>
    <scope>IDENTIFICATION BY MASS SPECTROMETRY [LARGE SCALE ANALYSIS]</scope>
</reference>
<reference key="6">
    <citation type="journal article" date="2011" name="BMC Syst. Biol.">
        <title>Initial characterization of the human central proteome.</title>
        <authorList>
            <person name="Burkard T.R."/>
            <person name="Planyavsky M."/>
            <person name="Kaupe I."/>
            <person name="Breitwieser F.P."/>
            <person name="Buerckstuemmer T."/>
            <person name="Bennett K.L."/>
            <person name="Superti-Furga G."/>
            <person name="Colinge J."/>
        </authorList>
    </citation>
    <scope>IDENTIFICATION BY MASS SPECTROMETRY [LARGE SCALE ANALYSIS]</scope>
</reference>
<reference key="7">
    <citation type="journal article" date="2013" name="J. Proteome Res.">
        <title>Toward a comprehensive characterization of a human cancer cell phosphoproteome.</title>
        <authorList>
            <person name="Zhou H."/>
            <person name="Di Palma S."/>
            <person name="Preisinger C."/>
            <person name="Peng M."/>
            <person name="Polat A.N."/>
            <person name="Heck A.J."/>
            <person name="Mohammed S."/>
        </authorList>
    </citation>
    <scope>PHOSPHORYLATION [LARGE SCALE ANALYSIS] AT SER-156</scope>
    <scope>IDENTIFICATION BY MASS SPECTROMETRY [LARGE SCALE ANALYSIS]</scope>
    <source>
        <tissue>Erythroleukemia</tissue>
    </source>
</reference>
<reference key="8">
    <citation type="journal article" date="2014" name="J. Neuromuscul. Dis.">
        <title>Mutations in the mitochondrial citrate carrier SLC25A1 are associated with impaired neuromuscular transmission.</title>
        <authorList>
            <person name="Chaouch A."/>
            <person name="Porcelli V."/>
            <person name="Cox D."/>
            <person name="Edvardson S."/>
            <person name="Scarcia P."/>
            <person name="De Grassi A."/>
            <person name="Pierri C.L."/>
            <person name="Cossins J."/>
            <person name="Laval S.H."/>
            <person name="Griffin H."/>
            <person name="Mueller J.S."/>
            <person name="Evangelista T."/>
            <person name="Toepf A."/>
            <person name="Abicht A."/>
            <person name="Huebner A."/>
            <person name="von der Hagen M."/>
            <person name="Bushby K."/>
            <person name="Straub V."/>
            <person name="Horvath R."/>
            <person name="Elpeleg O."/>
            <person name="Palace J."/>
            <person name="Senderek J."/>
            <person name="Beeson D."/>
            <person name="Palmieri L."/>
            <person name="Lochmueller H."/>
        </authorList>
    </citation>
    <scope>FUNCTION</scope>
    <scope>INVOLVEMENT IN CMS23</scope>
    <scope>VARIANT CMS23 GLN-247</scope>
</reference>
<reference key="9">
    <citation type="journal article" date="2014" name="J. Proteomics">
        <title>An enzyme assisted RP-RPLC approach for in-depth analysis of human liver phosphoproteome.</title>
        <authorList>
            <person name="Bian Y."/>
            <person name="Song C."/>
            <person name="Cheng K."/>
            <person name="Dong M."/>
            <person name="Wang F."/>
            <person name="Huang J."/>
            <person name="Sun D."/>
            <person name="Wang L."/>
            <person name="Ye M."/>
            <person name="Zou H."/>
        </authorList>
    </citation>
    <scope>IDENTIFICATION BY MASS SPECTROMETRY [LARGE SCALE ANALYSIS]</scope>
    <source>
        <tissue>Liver</tissue>
    </source>
</reference>
<reference key="10">
    <citation type="journal article" date="2015" name="Proteomics">
        <title>N-terminome analysis of the human mitochondrial proteome.</title>
        <authorList>
            <person name="Vaca Jacome A.S."/>
            <person name="Rabilloud T."/>
            <person name="Schaeffer-Reiss C."/>
            <person name="Rompais M."/>
            <person name="Ayoub D."/>
            <person name="Lane L."/>
            <person name="Bairoch A."/>
            <person name="Van Dorsselaer A."/>
            <person name="Carapito C."/>
        </authorList>
    </citation>
    <scope>IDENTIFICATION BY MASS SPECTROMETRY [LARGE SCALE ANALYSIS]</scope>
</reference>
<reference key="11">
    <citation type="journal article" date="2018" name="Biochim. Biophys. Acta">
        <title>Pathogenic mutations of the human mitochondrial citrate carrier SLC25A1 lead to impaired citrate export required for lipid, dolichol, ubiquinone and sterol synthesis.</title>
        <authorList>
            <person name="Majd H."/>
            <person name="King M.S."/>
            <person name="Smith A.C."/>
            <person name="Kunji E.R.S."/>
        </authorList>
    </citation>
    <scope>FUNCTION</scope>
    <scope>TRANSPORTER ACTIVITY</scope>
    <scope>BIOPHYSICOCHEMICAL PROPERTIES</scope>
    <scope>CHARACTERIZATION OF VARIANTS D2L2AD LEU-45; ASP-130; GLN-144; TRP-193; HIS-198; THR-202; CYS-282; GLY-282; HIS-282 AND CYS-297</scope>
    <scope>CHARACTERIZATION OF VARIANT CMS23 GLN-247</scope>
</reference>
<reference key="12">
    <citation type="journal article" date="2018" name="J. Inherit. Metab. Dis.">
        <title>An overview of combined D-2- and L-2-hydroxyglutaric aciduria: functional analysis of CIC variants.</title>
        <authorList>
            <person name="Pop A."/>
            <person name="Williams M."/>
            <person name="Struys E.A."/>
            <person name="Monne M."/>
            <person name="Jansen E.E.W."/>
            <person name="De Grassi A."/>
            <person name="Kanhai W.A."/>
            <person name="Scarcia P."/>
            <person name="Ojeda M.R.F."/>
            <person name="Porcelli V."/>
            <person name="van Dooren S.J.M."/>
            <person name="Lennertz P."/>
            <person name="Nota B."/>
            <person name="Abdenur J.E."/>
            <person name="Coman D."/>
            <person name="Das A.M."/>
            <person name="El-Gharbawy A."/>
            <person name="Nuoffer J.M."/>
            <person name="Polic B."/>
            <person name="Santer R."/>
            <person name="Weinhold N."/>
            <person name="Zuccarelli B."/>
            <person name="Palmieri F."/>
            <person name="Palmieri L."/>
            <person name="Salomons G.S."/>
        </authorList>
    </citation>
    <scope>FUNCTION</scope>
    <scope>TRANSPORTER ACTIVITY</scope>
    <scope>VARIANTS D2L2AD THR-28; ASN-40; LYS-47; ASP-93; TRP-193 AND ARG-262</scope>
    <scope>CHARACTERIZATION OF VARIANTS D2L2AD THR-28; ASN-40; LYS-47; ASP-93; TRP-193; 256-TYR--ASP-311 DEL AND ARG-262</scope>
</reference>
<reference key="13">
    <citation type="journal article" date="2025" name="EMBO J.">
        <title>SLC25A1 and ACLY maintain cytosolic acetyl-CoA and regulate ferroptosis susceptibility via FSP1 acetylation.</title>
        <authorList>
            <person name="Li W."/>
            <person name="Han J."/>
            <person name="Huang B."/>
            <person name="Xu T."/>
            <person name="Wan Y."/>
            <person name="Luo D."/>
            <person name="Kong W."/>
            <person name="Yu Y."/>
            <person name="Zhang L."/>
            <person name="Nian Y."/>
            <person name="Chu B."/>
            <person name="Yin C."/>
        </authorList>
    </citation>
    <scope>FUNCTION</scope>
</reference>
<reference key="14">
    <citation type="journal article" date="2013" name="Am. J. Hum. Genet.">
        <title>Deficiency in SLC25A1, encoding the mitochondrial citrate carrier, causes combined D-2- and L-2-hydroxyglutaric aciduria.</title>
        <authorList>
            <person name="Nota B."/>
            <person name="Struys E.A."/>
            <person name="Pop A."/>
            <person name="Jansen E.E."/>
            <person name="Fernandez Ojeda M.R."/>
            <person name="Kanhai W.A."/>
            <person name="Kranendijk M."/>
            <person name="van Dooren S.J."/>
            <person name="Bevova M.R."/>
            <person name="Sistermans E.A."/>
            <person name="Nieuwint A.W."/>
            <person name="Barth M."/>
            <person name="Ben-Omran T."/>
            <person name="Hoffmann G.F."/>
            <person name="de Lonlay P."/>
            <person name="McDonald M.T."/>
            <person name="Meberg A."/>
            <person name="Muntau A.C."/>
            <person name="Nuoffer J.M."/>
            <person name="Parini R."/>
            <person name="Read M.H."/>
            <person name="Renneberg A."/>
            <person name="Santer R."/>
            <person name="Strahleck T."/>
            <person name="van Schaftingen E."/>
            <person name="van der Knaap M.S."/>
            <person name="Jakobs C."/>
            <person name="Salomons G.S."/>
        </authorList>
    </citation>
    <scope>VARIANTS D2L2AD LEU-45; GLN-144; ARG-167; TRP-193; THR-202; 256-TYR--ASP-311 DEL; CYS-282; GLY-282 AND CYS-297</scope>
    <scope>CHARACTERIZATION OF VARIANT D2L2AD 256-TYR--ASP-311 DEL</scope>
</reference>
<reference key="15">
    <citation type="journal article" date="2013" name="J. Med. Genet.">
        <title>Agenesis of corpus callosum and optic nerve hypoplasia due to mutations in SLC25A1 encoding the mitochondrial citrate transporter.</title>
        <authorList>
            <person name="Edvardson S."/>
            <person name="Porcelli V."/>
            <person name="Jalas C."/>
            <person name="Soiferman D."/>
            <person name="Kellner Y."/>
            <person name="Shaag A."/>
            <person name="Korman S.H."/>
            <person name="Pierri C.L."/>
            <person name="Scarcia P."/>
            <person name="Fraenkel N.D."/>
            <person name="Segel R."/>
            <person name="Schechter A."/>
            <person name="Frumkin A."/>
            <person name="Pines O."/>
            <person name="Saada A."/>
            <person name="Palmieri L."/>
            <person name="Elpeleg O."/>
        </authorList>
    </citation>
    <scope>VARIANTS D2L2AD ASP-130 AND HIS-282</scope>
</reference>
<reference key="16">
    <citation type="journal article" date="2015" name="JIMD Rep.">
        <title>Expanding the clinical spectrum of mitochondrial citrate carrier (SLC25A1) deficiency: Facial dysmorphism in siblings with epileptic encephalopathy and combined D,L-2-hydroxyglutaric aciduria.</title>
        <authorList>
            <person name="Prasun P."/>
            <person name="Young S."/>
            <person name="Salomons G."/>
            <person name="Werneke A."/>
            <person name="Jiang Y.H."/>
            <person name="Struys E."/>
            <person name="Paige M."/>
            <person name="Avantaggiati M.L."/>
            <person name="McDonald M."/>
        </authorList>
    </citation>
    <scope>VARIANT D2L2AD LEU-45</scope>
</reference>
<reference key="17">
    <citation type="journal article" date="2016" name="JIMD Rep.">
        <title>Severe neonatal presentation of mitochondrial citrate carrier (SLC25A1) deficiency.</title>
        <authorList>
            <consortium name="FORGE Canada Consortium"/>
            <person name="Smith A."/>
            <person name="McBride S."/>
            <person name="Marcadier J.L."/>
            <person name="Michaud J."/>
            <person name="Al-Dirbashi O.Y."/>
            <person name="Schwartzentruber J."/>
            <person name="Beaulieu C.L."/>
            <person name="Katz S.L."/>
            <person name="Majewski J."/>
            <person name="Bulman D.E."/>
            <person name="Geraghty M.T."/>
            <person name="Harper M.E."/>
            <person name="Chakraborty P."/>
            <person name="Lines M.A."/>
        </authorList>
    </citation>
    <scope>VARIANT D2L2AD HIS-198</scope>
</reference>
<reference key="18">
    <citation type="journal article" date="2018" name="Am. J. Med. Genet. A">
        <title>A novel homozygous SLC25A1 mutation with impaired mitochondrial complex V: Possible phenotypic expansion.</title>
        <authorList>
            <person name="Cohen I."/>
            <person name="Staretz-Chacham O."/>
            <person name="Wormser O."/>
            <person name="Perez Y."/>
            <person name="Saada A."/>
            <person name="Kadir R."/>
            <person name="Birk O.S."/>
        </authorList>
    </citation>
    <scope>VARIANT D2L2AD SER-238</scope>
</reference>
<dbReference type="EMBL" id="U25147">
    <property type="protein sequence ID" value="AAB08515.1"/>
    <property type="molecule type" value="mRNA"/>
</dbReference>
<dbReference type="EMBL" id="L76134">
    <property type="protein sequence ID" value="AAL40091.1"/>
    <property type="molecule type" value="Genomic_DNA"/>
</dbReference>
<dbReference type="EMBL" id="L75823">
    <property type="protein sequence ID" value="AAL40090.1"/>
    <property type="molecule type" value="mRNA"/>
</dbReference>
<dbReference type="EMBL" id="AK292313">
    <property type="protein sequence ID" value="BAF85002.1"/>
    <property type="molecule type" value="mRNA"/>
</dbReference>
<dbReference type="EMBL" id="BC004980">
    <property type="protein sequence ID" value="AAH04980.1"/>
    <property type="molecule type" value="mRNA"/>
</dbReference>
<dbReference type="EMBL" id="BC008061">
    <property type="protein sequence ID" value="AAH08061.1"/>
    <property type="molecule type" value="mRNA"/>
</dbReference>
<dbReference type="CCDS" id="CCDS13758.1"/>
<dbReference type="PIR" id="G01789">
    <property type="entry name" value="G01789"/>
</dbReference>
<dbReference type="RefSeq" id="NP_005975.1">
    <property type="nucleotide sequence ID" value="NM_005984.5"/>
</dbReference>
<dbReference type="SMR" id="P53007"/>
<dbReference type="BioGRID" id="112464">
    <property type="interactions" value="290"/>
</dbReference>
<dbReference type="FunCoup" id="P53007">
    <property type="interactions" value="2094"/>
</dbReference>
<dbReference type="IntAct" id="P53007">
    <property type="interactions" value="117"/>
</dbReference>
<dbReference type="MINT" id="P53007"/>
<dbReference type="STRING" id="9606.ENSP00000215882"/>
<dbReference type="BindingDB" id="P53007"/>
<dbReference type="ChEMBL" id="CHEMBL5465271"/>
<dbReference type="DrugBank" id="DB09154">
    <property type="generic name" value="Sodium citrate"/>
</dbReference>
<dbReference type="GuidetoPHARMACOLOGY" id="1051"/>
<dbReference type="TCDB" id="2.A.29.7.2">
    <property type="family name" value="the mitochondrial carrier (mc) family"/>
</dbReference>
<dbReference type="GlyGen" id="P53007">
    <property type="glycosylation" value="1 site, 1 O-linked glycan (1 site)"/>
</dbReference>
<dbReference type="iPTMnet" id="P53007"/>
<dbReference type="PhosphoSitePlus" id="P53007"/>
<dbReference type="SwissPalm" id="P53007"/>
<dbReference type="BioMuta" id="SLC25A1"/>
<dbReference type="DMDM" id="20141931"/>
<dbReference type="CPTAC" id="CPTAC-586"/>
<dbReference type="CPTAC" id="CPTAC-587"/>
<dbReference type="jPOST" id="P53007"/>
<dbReference type="MassIVE" id="P53007"/>
<dbReference type="PaxDb" id="9606-ENSP00000215882"/>
<dbReference type="PeptideAtlas" id="P53007"/>
<dbReference type="ProteomicsDB" id="56567"/>
<dbReference type="Pumba" id="P53007"/>
<dbReference type="TopDownProteomics" id="P53007"/>
<dbReference type="Antibodypedia" id="22859">
    <property type="antibodies" value="143 antibodies from 23 providers"/>
</dbReference>
<dbReference type="DNASU" id="6576"/>
<dbReference type="Ensembl" id="ENST00000215882.10">
    <property type="protein sequence ID" value="ENSP00000215882.5"/>
    <property type="gene ID" value="ENSG00000100075.10"/>
</dbReference>
<dbReference type="GeneID" id="6576"/>
<dbReference type="KEGG" id="hsa:6576"/>
<dbReference type="MANE-Select" id="ENST00000215882.10">
    <property type="protein sequence ID" value="ENSP00000215882.5"/>
    <property type="RefSeq nucleotide sequence ID" value="NM_005984.5"/>
    <property type="RefSeq protein sequence ID" value="NP_005975.1"/>
</dbReference>
<dbReference type="UCSC" id="uc002zoz.6">
    <property type="organism name" value="human"/>
</dbReference>
<dbReference type="AGR" id="HGNC:10979"/>
<dbReference type="CTD" id="6576"/>
<dbReference type="DisGeNET" id="6576"/>
<dbReference type="GeneCards" id="SLC25A1"/>
<dbReference type="GeneReviews" id="SLC25A1"/>
<dbReference type="HGNC" id="HGNC:10979">
    <property type="gene designation" value="SLC25A1"/>
</dbReference>
<dbReference type="HPA" id="ENSG00000100075">
    <property type="expression patterns" value="Tissue enhanced (liver)"/>
</dbReference>
<dbReference type="MalaCards" id="SLC25A1"/>
<dbReference type="MIM" id="190315">
    <property type="type" value="gene"/>
</dbReference>
<dbReference type="MIM" id="615182">
    <property type="type" value="phenotype"/>
</dbReference>
<dbReference type="MIM" id="618197">
    <property type="type" value="phenotype"/>
</dbReference>
<dbReference type="neXtProt" id="NX_P53007"/>
<dbReference type="OpenTargets" id="ENSG00000100075"/>
<dbReference type="Orphanet" id="356978">
    <property type="disease" value="D,L-2-hydroxyglutaric aciduria"/>
</dbReference>
<dbReference type="Orphanet" id="98914">
    <property type="disease" value="Presynaptic congenital myasthenic syndromes"/>
</dbReference>
<dbReference type="PharmGKB" id="PA35855"/>
<dbReference type="VEuPathDB" id="HostDB:ENSG00000100075"/>
<dbReference type="eggNOG" id="KOG0756">
    <property type="taxonomic scope" value="Eukaryota"/>
</dbReference>
<dbReference type="GeneTree" id="ENSGT00550000074856"/>
<dbReference type="HOGENOM" id="CLU_015166_5_1_1"/>
<dbReference type="InParanoid" id="P53007"/>
<dbReference type="OMA" id="AWYAGCT"/>
<dbReference type="OrthoDB" id="44467at2759"/>
<dbReference type="PAN-GO" id="P53007">
    <property type="GO annotations" value="3 GO annotations based on evolutionary models"/>
</dbReference>
<dbReference type="PhylomeDB" id="P53007"/>
<dbReference type="TreeFam" id="TF105786"/>
<dbReference type="PathwayCommons" id="P53007"/>
<dbReference type="Reactome" id="R-HSA-428643">
    <property type="pathway name" value="Organic anion transporters"/>
</dbReference>
<dbReference type="SignaLink" id="P53007"/>
<dbReference type="SIGNOR" id="P53007"/>
<dbReference type="BioGRID-ORCS" id="6576">
    <property type="hits" value="81 hits in 1160 CRISPR screens"/>
</dbReference>
<dbReference type="CD-CODE" id="FB4E32DD">
    <property type="entry name" value="Presynaptic clusters and postsynaptic densities"/>
</dbReference>
<dbReference type="ChiTaRS" id="SLC25A1">
    <property type="organism name" value="human"/>
</dbReference>
<dbReference type="GeneWiki" id="SLC25A1"/>
<dbReference type="GenomeRNAi" id="6576"/>
<dbReference type="Pharos" id="P53007">
    <property type="development level" value="Tbio"/>
</dbReference>
<dbReference type="PRO" id="PR:P53007"/>
<dbReference type="Proteomes" id="UP000005640">
    <property type="component" value="Chromosome 22"/>
</dbReference>
<dbReference type="RNAct" id="P53007">
    <property type="molecule type" value="protein"/>
</dbReference>
<dbReference type="Bgee" id="ENSG00000100075">
    <property type="expression patterns" value="Expressed in endometrium epithelium and 194 other cell types or tissues"/>
</dbReference>
<dbReference type="ExpressionAtlas" id="P53007">
    <property type="expression patterns" value="baseline and differential"/>
</dbReference>
<dbReference type="GO" id="GO:0070062">
    <property type="term" value="C:extracellular exosome"/>
    <property type="evidence" value="ECO:0007005"/>
    <property type="project" value="UniProtKB"/>
</dbReference>
<dbReference type="GO" id="GO:0005743">
    <property type="term" value="C:mitochondrial inner membrane"/>
    <property type="evidence" value="ECO:0000250"/>
    <property type="project" value="UniProtKB"/>
</dbReference>
<dbReference type="GO" id="GO:0031966">
    <property type="term" value="C:mitochondrial membrane"/>
    <property type="evidence" value="ECO:0000315"/>
    <property type="project" value="UniProt"/>
</dbReference>
<dbReference type="GO" id="GO:0005739">
    <property type="term" value="C:mitochondrion"/>
    <property type="evidence" value="ECO:0006056"/>
    <property type="project" value="FlyBase"/>
</dbReference>
<dbReference type="GO" id="GO:0005634">
    <property type="term" value="C:nucleus"/>
    <property type="evidence" value="ECO:0007005"/>
    <property type="project" value="UniProtKB"/>
</dbReference>
<dbReference type="GO" id="GO:0015297">
    <property type="term" value="F:antiporter activity"/>
    <property type="evidence" value="ECO:0007669"/>
    <property type="project" value="UniProtKB-KW"/>
</dbReference>
<dbReference type="GO" id="GO:0071913">
    <property type="term" value="F:citrate secondary active transmembrane transporter activity"/>
    <property type="evidence" value="ECO:0000314"/>
    <property type="project" value="UniProtKB"/>
</dbReference>
<dbReference type="GO" id="GO:0015137">
    <property type="term" value="F:citrate transmembrane transporter activity"/>
    <property type="evidence" value="ECO:0000304"/>
    <property type="project" value="UniProtKB"/>
</dbReference>
<dbReference type="GO" id="GO:0015142">
    <property type="term" value="F:tricarboxylic acid transmembrane transporter activity"/>
    <property type="evidence" value="ECO:0000314"/>
    <property type="project" value="UniProtKB"/>
</dbReference>
<dbReference type="GO" id="GO:0006843">
    <property type="term" value="P:mitochondrial citrate transmembrane transport"/>
    <property type="evidence" value="ECO:0000314"/>
    <property type="project" value="UniProtKB"/>
</dbReference>
<dbReference type="GO" id="GO:0006811">
    <property type="term" value="P:monoatomic ion transport"/>
    <property type="evidence" value="ECO:0000304"/>
    <property type="project" value="Reactome"/>
</dbReference>
<dbReference type="GO" id="GO:0110076">
    <property type="term" value="P:negative regulation of ferroptosis"/>
    <property type="evidence" value="ECO:0000315"/>
    <property type="project" value="UniProt"/>
</dbReference>
<dbReference type="FunFam" id="1.50.40.10:FF:000007">
    <property type="entry name" value="Mitochondrial tricarboxylate transport protein-like"/>
    <property type="match status" value="1"/>
</dbReference>
<dbReference type="Gene3D" id="1.50.40.10">
    <property type="entry name" value="Mitochondrial carrier domain"/>
    <property type="match status" value="1"/>
</dbReference>
<dbReference type="InterPro" id="IPR002067">
    <property type="entry name" value="Mit_carrier"/>
</dbReference>
<dbReference type="InterPro" id="IPR018108">
    <property type="entry name" value="Mitochondrial_sb/sol_carrier"/>
</dbReference>
<dbReference type="InterPro" id="IPR023395">
    <property type="entry name" value="Mt_carrier_dom_sf"/>
</dbReference>
<dbReference type="InterPro" id="IPR049563">
    <property type="entry name" value="TXTP-like"/>
</dbReference>
<dbReference type="PANTHER" id="PTHR45788">
    <property type="entry name" value="SUCCINATE/FUMARATE MITOCHONDRIAL TRANSPORTER-RELATED"/>
    <property type="match status" value="1"/>
</dbReference>
<dbReference type="PANTHER" id="PTHR45788:SF4">
    <property type="entry name" value="TRICARBOXYLATE TRANSPORT PROTEIN, MITOCHONDRIAL"/>
    <property type="match status" value="1"/>
</dbReference>
<dbReference type="Pfam" id="PF00153">
    <property type="entry name" value="Mito_carr"/>
    <property type="match status" value="3"/>
</dbReference>
<dbReference type="PRINTS" id="PR00926">
    <property type="entry name" value="MITOCARRIER"/>
</dbReference>
<dbReference type="SUPFAM" id="SSF103506">
    <property type="entry name" value="Mitochondrial carrier"/>
    <property type="match status" value="1"/>
</dbReference>
<dbReference type="PROSITE" id="PS50920">
    <property type="entry name" value="SOLCAR"/>
    <property type="match status" value="3"/>
</dbReference>
<feature type="propeptide" id="PRO_0000456575" description="Removed in mature form" evidence="1">
    <location>
        <begin position="1"/>
        <end position="13"/>
    </location>
</feature>
<feature type="chain" id="PRO_0000019262" description="Tricarboxylate transport protein, mitochondrial">
    <location>
        <begin position="14"/>
        <end position="311"/>
    </location>
</feature>
<feature type="transmembrane region" description="Helical; Name=1" evidence="3">
    <location>
        <begin position="29"/>
        <end position="46"/>
    </location>
</feature>
<feature type="transmembrane region" description="Helical; Name=2" evidence="3">
    <location>
        <begin position="86"/>
        <end position="105"/>
    </location>
</feature>
<feature type="transmembrane region" description="Helical; Name=3" evidence="3">
    <location>
        <begin position="129"/>
        <end position="143"/>
    </location>
</feature>
<feature type="transmembrane region" description="Helical; Name=4" evidence="3">
    <location>
        <begin position="183"/>
        <end position="202"/>
    </location>
</feature>
<feature type="transmembrane region" description="Helical; Name=5" evidence="3">
    <location>
        <begin position="224"/>
        <end position="241"/>
    </location>
</feature>
<feature type="transmembrane region" description="Helical; Name=6" evidence="3">
    <location>
        <begin position="278"/>
        <end position="297"/>
    </location>
</feature>
<feature type="repeat" description="Solcar 1" evidence="4">
    <location>
        <begin position="23"/>
        <end position="111"/>
    </location>
</feature>
<feature type="repeat" description="Solcar 2" evidence="4">
    <location>
        <begin position="122"/>
        <end position="208"/>
    </location>
</feature>
<feature type="repeat" description="Solcar 3" evidence="4">
    <location>
        <begin position="218"/>
        <end position="303"/>
    </location>
</feature>
<feature type="modified residue" description="Phosphoserine" evidence="17">
    <location>
        <position position="156"/>
    </location>
</feature>
<feature type="sequence variant" id="VAR_081661" description="In D2L2AD; uncertain significance; very mild decrease of citrate transport rates." evidence="12">
    <original>A</original>
    <variation>T</variation>
    <location>
        <position position="28"/>
    </location>
</feature>
<feature type="sequence variant" id="VAR_081662" description="In D2L2AD; reduced rates of citrate transport." evidence="12">
    <original>I</original>
    <variation>N</variation>
    <location>
        <position position="40"/>
    </location>
</feature>
<feature type="sequence variant" id="VAR_069490" description="In D2L2AD; severely reduced rates of citrate transport." evidence="6 7 10">
    <original>P</original>
    <variation>L</variation>
    <location>
        <position position="45"/>
    </location>
</feature>
<feature type="sequence variant" id="VAR_081663" description="In D2L2AD; severely reduced rates of citrate transport; dbSNP:rs1555923307." evidence="12">
    <original>E</original>
    <variation>K</variation>
    <location>
        <position position="47"/>
    </location>
</feature>
<feature type="sequence variant" id="VAR_081664" description="In D2L2AD; severely reduced rates of citrate transport." evidence="12">
    <original>G</original>
    <variation>D</variation>
    <location>
        <position position="93"/>
    </location>
</feature>
<feature type="sequence variant" id="VAR_081665" description="In D2L2AD; severely reduced rates of citrate transport; dbSNP:rs368647424." evidence="5 10">
    <original>G</original>
    <variation>D</variation>
    <location>
        <position position="130"/>
    </location>
</feature>
<feature type="sequence variant" id="VAR_069491" description="In D2L2AD; abolishes citrate transport." evidence="6 10">
    <original>E</original>
    <variation>Q</variation>
    <location>
        <position position="144"/>
    </location>
</feature>
<feature type="sequence variant" id="VAR_069492" description="In D2L2AD; dbSNP:rs2146144018." evidence="6">
    <original>G</original>
    <variation>R</variation>
    <location>
        <position position="167"/>
    </location>
</feature>
<feature type="sequence variant" id="VAR_069493" description="In D2L2AD; reduced rates of citrate transport; dbSNP:rs781925968." evidence="6 10 12">
    <original>S</original>
    <variation>W</variation>
    <location>
        <position position="193"/>
    </location>
</feature>
<feature type="sequence variant" id="VAR_077511" description="In D2L2AD; severely reduced rates of citrate transport; dbSNP:rs1331417017." evidence="9 10">
    <original>R</original>
    <variation>H</variation>
    <location>
        <position position="198"/>
    </location>
</feature>
<feature type="sequence variant" id="VAR_069494" description="In D2L2AD; reduced rates of citrate transport; dbSNP:rs782335811." evidence="6 10">
    <original>M</original>
    <variation>T</variation>
    <location>
        <position position="202"/>
    </location>
</feature>
<feature type="sequence variant" id="VAR_081666" description="In D2L2AD; disease phenotype may include decreased activity of mitochondrial respiratory chain complex V." evidence="11">
    <original>N</original>
    <variation>S</variation>
    <location>
        <position position="238"/>
    </location>
</feature>
<feature type="sequence variant" id="VAR_081667" description="In CMS23; reduced rates of citrate transport; dbSNP:rs781908532." evidence="8 10">
    <original>R</original>
    <variation>Q</variation>
    <location>
        <position position="247"/>
    </location>
</feature>
<feature type="sequence variant" id="VAR_081668" description="In D2L2AD; no protein detected by Western blot in patient fibroblasts; severely reduced rates of citrate transport." evidence="6 12">
    <location>
        <begin position="256"/>
        <end position="311"/>
    </location>
</feature>
<feature type="sequence variant" id="VAR_081669" description="In D2L2AD; reduced rates of citrate transport; dbSNP:rs2083960955." evidence="12">
    <original>C</original>
    <variation>R</variation>
    <location>
        <position position="262"/>
    </location>
</feature>
<feature type="sequence variant" id="VAR_069495" description="In D2L2AD; abolishes citrate transport; dbSNP:rs431905509." evidence="6 10">
    <original>R</original>
    <variation>C</variation>
    <location>
        <position position="282"/>
    </location>
</feature>
<feature type="sequence variant" id="VAR_069496" description="In D2L2AD; abolishes citrate transport; dbSNP:rs431905509." evidence="6 10">
    <original>R</original>
    <variation>G</variation>
    <location>
        <position position="282"/>
    </location>
</feature>
<feature type="sequence variant" id="VAR_081670" description="In D2L2AD; abolishes citrate transport; dbSNP:rs431905510." evidence="5 10">
    <original>R</original>
    <variation>H</variation>
    <location>
        <position position="282"/>
    </location>
</feature>
<feature type="sequence variant" id="VAR_069497" description="In D2L2AD; reduced rates of citrate transport." evidence="6 10">
    <original>Y</original>
    <variation>C</variation>
    <location>
        <position position="297"/>
    </location>
</feature>
<feature type="sequence conflict" description="In Ref. 1; AAB08515." evidence="15" ref="1">
    <original>G</original>
    <variation>E</variation>
    <location>
        <position position="26"/>
    </location>
</feature>
<proteinExistence type="evidence at protein level"/>
<sequence>MPAPRAPRALAAAAPASGKAKLTHPGKAILAGGLAGGIEICITFPTEYVKTQLQLDERSHPPRYRGIGDCVRQTVRSHGVLGLYRGLSSLLYGSIPKAAVRFGMFEFLSNHMRDAQGRLDSTRGLLCGLGAGVAEAVVVVCPMETIKVKFIHDQTSPNPKYRGFFHGVREIVREQGLKGTYQGLTATVLKQGSNQAIRFFVMTSLRNWYRGDNPNKPMNPLITGVFGAIAGAASVFGNTPLDVIKTRMQGLEAHKYRNTWDCGLQILKKEGLKAFYKGTVPRLGRVCLDVAIVFVIYDEVVKLLNKVWKTD</sequence>
<comment type="function">
    <text evidence="8 10 12 13">Mitochondrial electroneutral antiporter that exports citrate from the mitochondria into the cytosol in exchange for malate (PubMed:26870663, PubMed:29031613, PubMed:29238895, PubMed:39881208). Also able to mediate the exchange of citrate for isocitrate, phosphoenolpyruvate, cis-aconitate and to a lesser extent trans-aconitate, maleate and succinate (PubMed:29031613). In the cytoplasm, citrate plays important roles in fatty acid and sterol synthesis, regulation of glycolysis, protein acetylation, and other physiopathological processes (PubMed:29031613, PubMed:29238895, PubMed:39881208).</text>
</comment>
<comment type="catalytic activity">
    <reaction evidence="10 16">
        <text>(S)-malate(in) + citrate(out) = (S)-malate(out) + citrate(in)</text>
        <dbReference type="Rhea" id="RHEA:72483"/>
        <dbReference type="ChEBI" id="CHEBI:15589"/>
        <dbReference type="ChEBI" id="CHEBI:16947"/>
    </reaction>
</comment>
<comment type="catalytic activity">
    <reaction evidence="10">
        <text>D-threo-isocitrate(in) + citrate(out) = D-threo-isocitrate(out) + citrate(in)</text>
        <dbReference type="Rhea" id="RHEA:72471"/>
        <dbReference type="ChEBI" id="CHEBI:15562"/>
        <dbReference type="ChEBI" id="CHEBI:16947"/>
    </reaction>
</comment>
<comment type="catalytic activity">
    <reaction evidence="10">
        <text>citrate(out) + succinate(in) = citrate(in) + succinate(out)</text>
        <dbReference type="Rhea" id="RHEA:28835"/>
        <dbReference type="ChEBI" id="CHEBI:16947"/>
        <dbReference type="ChEBI" id="CHEBI:30031"/>
    </reaction>
</comment>
<comment type="catalytic activity">
    <reaction evidence="10">
        <text>cis-aconitate(in) + citrate(out) = cis-aconitate(out) + citrate(in)</text>
        <dbReference type="Rhea" id="RHEA:72475"/>
        <dbReference type="ChEBI" id="CHEBI:16383"/>
        <dbReference type="ChEBI" id="CHEBI:16947"/>
    </reaction>
</comment>
<comment type="catalytic activity">
    <reaction evidence="10">
        <text>trans-aconitate(in) + citrate(out) = trans-aconitate(out) + citrate(in)</text>
        <dbReference type="Rhea" id="RHEA:72479"/>
        <dbReference type="ChEBI" id="CHEBI:15708"/>
        <dbReference type="ChEBI" id="CHEBI:16947"/>
    </reaction>
</comment>
<comment type="catalytic activity">
    <reaction evidence="10">
        <text>phosphoenolpyruvate(in) + citrate(out) = phosphoenolpyruvate(out) + citrate(in)</text>
        <dbReference type="Rhea" id="RHEA:72487"/>
        <dbReference type="ChEBI" id="CHEBI:16947"/>
        <dbReference type="ChEBI" id="CHEBI:58702"/>
    </reaction>
</comment>
<comment type="catalytic activity">
    <reaction evidence="10">
        <text>maleate(in) + citrate(out) = maleate(out) + citrate(in)</text>
        <dbReference type="Rhea" id="RHEA:72491"/>
        <dbReference type="ChEBI" id="CHEBI:16947"/>
        <dbReference type="ChEBI" id="CHEBI:30780"/>
    </reaction>
</comment>
<comment type="biophysicochemical properties">
    <kinetics>
        <KM evidence="10">7.5 uM for citrate</KM>
    </kinetics>
</comment>
<comment type="subcellular location">
    <subcellularLocation>
        <location evidence="2">Mitochondrion inner membrane</location>
        <topology evidence="3">Multi-pass membrane protein</topology>
    </subcellularLocation>
</comment>
<comment type="PTM">
    <text evidence="1">Possesses a short cleavable presequence, which, however, is found to be dispensable both for targeting to mitochondria and insertion into the inner membrane. However, the presequence is required to keep SLC25A1 in a soluble state and thus in an import-competent state. Mature SLC25A1 lacking the presequence is prone to aggregation.</text>
</comment>
<comment type="disease" evidence="5 6 7 9 10 11 12">
    <disease id="DI-03710">
        <name>Combined D-2- and L-2-hydroxyglutaric aciduria</name>
        <acronym>D2L2AD</acronym>
        <description>An autosomal recessive neurometabolic disorder characterized by neonatal-onset encephalopathy with severe muscular weakness, intractable seizures, respiratory distress, and lack of psychomotor development resulting in early death. Brain imaging shows abnormalities including enlarged ventricles, delayed myelination, and germinal layer cysts.</description>
        <dbReference type="MIM" id="615182"/>
    </disease>
    <text>The disease is caused by variants affecting the gene represented in this entry.</text>
</comment>
<comment type="disease" evidence="8 10">
    <disease id="DI-05393">
        <name>Myasthenic syndrome, congenital, 23, presynaptic</name>
        <acronym>CMS23</acronym>
        <description>A form of congenital myasthenic syndrome, a group of disorders characterized by failure of neuromuscular transmission, including pre-synaptic, synaptic, and post-synaptic disorders that are not of autoimmune origin. Clinical features include easy fatigability and muscle weakness. CMS23 inheritance is autosomal recessive.</description>
        <dbReference type="MIM" id="618197"/>
    </disease>
    <text>The disease is caused by variants affecting the gene represented in this entry.</text>
</comment>
<comment type="similarity">
    <text evidence="15">Belongs to the mitochondrial carrier (TC 2.A.29) family.</text>
</comment>
<organism>
    <name type="scientific">Homo sapiens</name>
    <name type="common">Human</name>
    <dbReference type="NCBI Taxonomy" id="9606"/>
    <lineage>
        <taxon>Eukaryota</taxon>
        <taxon>Metazoa</taxon>
        <taxon>Chordata</taxon>
        <taxon>Craniata</taxon>
        <taxon>Vertebrata</taxon>
        <taxon>Euteleostomi</taxon>
        <taxon>Mammalia</taxon>
        <taxon>Eutheria</taxon>
        <taxon>Euarchontoglires</taxon>
        <taxon>Primates</taxon>
        <taxon>Haplorrhini</taxon>
        <taxon>Catarrhini</taxon>
        <taxon>Hominidae</taxon>
        <taxon>Homo</taxon>
    </lineage>
</organism>
<accession>P53007</accession>
<accession>A8K8E8</accession>
<accession>Q9BSK6</accession>
<gene>
    <name type="primary">SLC25A1</name>
    <name type="synonym">SLC20A3</name>
</gene>